<sequence>MIKTKIMGILNVTPDSFSDGGQYHSVDQAVKRAKEMIDEGVDIIDVGGVSTRPGHKEVSHKEVSLKEEMNRVLPVVESIVKYDVQISVDTFRSEVAEACLKLGVSMINDQWAGLFDSNMFNVVSQYGAEIVLMHNGDGHRDKPVVEEMLVSLLAQANKAELAGIPHNKIWLDPGIGFAKTREEENEVMARLDELVATEYPVLLATSRKRYIKEMMNQDSSPSDRDEATAATTAYGIMKGVRGVRVHNVLLNTRLAQSMDFLKENEYERHHLS</sequence>
<gene>
    <name type="primary">folP</name>
    <name type="ordered locus">SERP0153</name>
</gene>
<protein>
    <recommendedName>
        <fullName>Dihydropteroate synthase</fullName>
        <shortName>DHPS</shortName>
        <ecNumber>2.5.1.15</ecNumber>
    </recommendedName>
    <alternativeName>
        <fullName>Dihydropteroate pyrophosphorylase</fullName>
    </alternativeName>
</protein>
<keyword id="KW-0289">Folate biosynthesis</keyword>
<keyword id="KW-0460">Magnesium</keyword>
<keyword id="KW-0479">Metal-binding</keyword>
<keyword id="KW-1185">Reference proteome</keyword>
<keyword id="KW-0808">Transferase</keyword>
<evidence type="ECO:0000250" key="1"/>
<evidence type="ECO:0000250" key="2">
    <source>
        <dbReference type="UniProtKB" id="P0AC13"/>
    </source>
</evidence>
<evidence type="ECO:0000250" key="3">
    <source>
        <dbReference type="UniProtKB" id="P9WND1"/>
    </source>
</evidence>
<evidence type="ECO:0000255" key="4">
    <source>
        <dbReference type="PROSITE-ProRule" id="PRU00334"/>
    </source>
</evidence>
<evidence type="ECO:0000305" key="5"/>
<proteinExistence type="inferred from homology"/>
<organism>
    <name type="scientific">Staphylococcus epidermidis (strain ATCC 35984 / DSM 28319 / BCRC 17069 / CCUG 31568 / BM 3577 / RP62A)</name>
    <dbReference type="NCBI Taxonomy" id="176279"/>
    <lineage>
        <taxon>Bacteria</taxon>
        <taxon>Bacillati</taxon>
        <taxon>Bacillota</taxon>
        <taxon>Bacilli</taxon>
        <taxon>Bacillales</taxon>
        <taxon>Staphylococcaceae</taxon>
        <taxon>Staphylococcus</taxon>
    </lineage>
</organism>
<name>DHPS_STAEQ</name>
<dbReference type="EC" id="2.5.1.15"/>
<dbReference type="EMBL" id="CP000029">
    <property type="protein sequence ID" value="AAW53522.1"/>
    <property type="molecule type" value="Genomic_DNA"/>
</dbReference>
<dbReference type="RefSeq" id="WP_002457105.1">
    <property type="nucleotide sequence ID" value="NC_002976.3"/>
</dbReference>
<dbReference type="SMR" id="Q5HRP0"/>
<dbReference type="STRING" id="176279.SERP0153"/>
<dbReference type="KEGG" id="ser:SERP0153"/>
<dbReference type="eggNOG" id="COG0294">
    <property type="taxonomic scope" value="Bacteria"/>
</dbReference>
<dbReference type="HOGENOM" id="CLU_008023_0_2_9"/>
<dbReference type="UniPathway" id="UPA00077">
    <property type="reaction ID" value="UER00156"/>
</dbReference>
<dbReference type="Proteomes" id="UP000000531">
    <property type="component" value="Chromosome"/>
</dbReference>
<dbReference type="GO" id="GO:0005829">
    <property type="term" value="C:cytosol"/>
    <property type="evidence" value="ECO:0007669"/>
    <property type="project" value="TreeGrafter"/>
</dbReference>
<dbReference type="GO" id="GO:0004156">
    <property type="term" value="F:dihydropteroate synthase activity"/>
    <property type="evidence" value="ECO:0007669"/>
    <property type="project" value="UniProtKB-EC"/>
</dbReference>
<dbReference type="GO" id="GO:0046872">
    <property type="term" value="F:metal ion binding"/>
    <property type="evidence" value="ECO:0007669"/>
    <property type="project" value="UniProtKB-KW"/>
</dbReference>
<dbReference type="GO" id="GO:0046656">
    <property type="term" value="P:folic acid biosynthetic process"/>
    <property type="evidence" value="ECO:0007669"/>
    <property type="project" value="UniProtKB-KW"/>
</dbReference>
<dbReference type="GO" id="GO:0046654">
    <property type="term" value="P:tetrahydrofolate biosynthetic process"/>
    <property type="evidence" value="ECO:0007669"/>
    <property type="project" value="UniProtKB-UniPathway"/>
</dbReference>
<dbReference type="CDD" id="cd00739">
    <property type="entry name" value="DHPS"/>
    <property type="match status" value="1"/>
</dbReference>
<dbReference type="Gene3D" id="3.20.20.20">
    <property type="entry name" value="Dihydropteroate synthase-like"/>
    <property type="match status" value="1"/>
</dbReference>
<dbReference type="InterPro" id="IPR045031">
    <property type="entry name" value="DHP_synth-like"/>
</dbReference>
<dbReference type="InterPro" id="IPR006390">
    <property type="entry name" value="DHP_synth_dom"/>
</dbReference>
<dbReference type="InterPro" id="IPR011005">
    <property type="entry name" value="Dihydropteroate_synth-like_sf"/>
</dbReference>
<dbReference type="InterPro" id="IPR000489">
    <property type="entry name" value="Pterin-binding_dom"/>
</dbReference>
<dbReference type="NCBIfam" id="TIGR01496">
    <property type="entry name" value="DHPS"/>
    <property type="match status" value="1"/>
</dbReference>
<dbReference type="PANTHER" id="PTHR20941">
    <property type="entry name" value="FOLATE SYNTHESIS PROTEINS"/>
    <property type="match status" value="1"/>
</dbReference>
<dbReference type="PANTHER" id="PTHR20941:SF1">
    <property type="entry name" value="FOLIC ACID SYNTHESIS PROTEIN FOL1"/>
    <property type="match status" value="1"/>
</dbReference>
<dbReference type="Pfam" id="PF00809">
    <property type="entry name" value="Pterin_bind"/>
    <property type="match status" value="1"/>
</dbReference>
<dbReference type="SUPFAM" id="SSF51717">
    <property type="entry name" value="Dihydropteroate synthetase-like"/>
    <property type="match status" value="1"/>
</dbReference>
<dbReference type="PROSITE" id="PS00792">
    <property type="entry name" value="DHPS_1"/>
    <property type="match status" value="1"/>
</dbReference>
<dbReference type="PROSITE" id="PS00793">
    <property type="entry name" value="DHPS_2"/>
    <property type="match status" value="1"/>
</dbReference>
<dbReference type="PROSITE" id="PS50972">
    <property type="entry name" value="PTERIN_BINDING"/>
    <property type="match status" value="1"/>
</dbReference>
<reference key="1">
    <citation type="journal article" date="2005" name="J. Bacteriol.">
        <title>Insights on evolution of virulence and resistance from the complete genome analysis of an early methicillin-resistant Staphylococcus aureus strain and a biofilm-producing methicillin-resistant Staphylococcus epidermidis strain.</title>
        <authorList>
            <person name="Gill S.R."/>
            <person name="Fouts D.E."/>
            <person name="Archer G.L."/>
            <person name="Mongodin E.F."/>
            <person name="DeBoy R.T."/>
            <person name="Ravel J."/>
            <person name="Paulsen I.T."/>
            <person name="Kolonay J.F."/>
            <person name="Brinkac L.M."/>
            <person name="Beanan M.J."/>
            <person name="Dodson R.J."/>
            <person name="Daugherty S.C."/>
            <person name="Madupu R."/>
            <person name="Angiuoli S.V."/>
            <person name="Durkin A.S."/>
            <person name="Haft D.H."/>
            <person name="Vamathevan J.J."/>
            <person name="Khouri H."/>
            <person name="Utterback T.R."/>
            <person name="Lee C."/>
            <person name="Dimitrov G."/>
            <person name="Jiang L."/>
            <person name="Qin H."/>
            <person name="Weidman J."/>
            <person name="Tran K."/>
            <person name="Kang K.H."/>
            <person name="Hance I.R."/>
            <person name="Nelson K.E."/>
            <person name="Fraser C.M."/>
        </authorList>
    </citation>
    <scope>NUCLEOTIDE SEQUENCE [LARGE SCALE GENOMIC DNA]</scope>
    <source>
        <strain>ATCC 35984 / DSM 28319 / BCRC 17069 / CCUG 31568 / BM 3577 / RP62A</strain>
    </source>
</reference>
<comment type="function">
    <text evidence="2">Catalyzes the condensation of para-aminobenzoate (pABA) with 6-hydroxymethyl-7,8-dihydropterin diphosphate (DHPt-PP) to form 7,8-dihydropteroate (H2Pte), the immediate precursor of folate derivatives.</text>
</comment>
<comment type="catalytic activity">
    <reaction evidence="2">
        <text>(7,8-dihydropterin-6-yl)methyl diphosphate + 4-aminobenzoate = 7,8-dihydropteroate + diphosphate</text>
        <dbReference type="Rhea" id="RHEA:19949"/>
        <dbReference type="ChEBI" id="CHEBI:17836"/>
        <dbReference type="ChEBI" id="CHEBI:17839"/>
        <dbReference type="ChEBI" id="CHEBI:33019"/>
        <dbReference type="ChEBI" id="CHEBI:72950"/>
        <dbReference type="EC" id="2.5.1.15"/>
    </reaction>
</comment>
<comment type="cofactor">
    <cofactor evidence="2">
        <name>Mg(2+)</name>
        <dbReference type="ChEBI" id="CHEBI:18420"/>
    </cofactor>
</comment>
<comment type="pathway">
    <text>Cofactor biosynthesis; tetrahydrofolate biosynthesis; 7,8-dihydrofolate from 2-amino-4-hydroxy-6-hydroxymethyl-7,8-dihydropteridine diphosphate and 4-aminobenzoate: step 1/2.</text>
</comment>
<comment type="subunit">
    <text evidence="1">Homodimer.</text>
</comment>
<comment type="similarity">
    <text evidence="5">Belongs to the DHPS family.</text>
</comment>
<accession>Q5HRP0</accession>
<feature type="chain" id="PRO_0000168228" description="Dihydropteroate synthase">
    <location>
        <begin position="1"/>
        <end position="272"/>
    </location>
</feature>
<feature type="domain" description="Pterin-binding" evidence="4">
    <location>
        <begin position="1"/>
        <end position="251"/>
    </location>
</feature>
<feature type="binding site" evidence="3">
    <location>
        <position position="11"/>
    </location>
    <ligand>
        <name>Mg(2+)</name>
        <dbReference type="ChEBI" id="CHEBI:18420"/>
    </ligand>
</feature>
<feature type="binding site" evidence="2">
    <location>
        <position position="51"/>
    </location>
    <ligand>
        <name>(7,8-dihydropterin-6-yl)methyl diphosphate</name>
        <dbReference type="ChEBI" id="CHEBI:72950"/>
    </ligand>
</feature>
<feature type="binding site" evidence="2">
    <location>
        <position position="89"/>
    </location>
    <ligand>
        <name>(7,8-dihydropterin-6-yl)methyl diphosphate</name>
        <dbReference type="ChEBI" id="CHEBI:72950"/>
    </ligand>
</feature>
<feature type="binding site" evidence="2">
    <location>
        <position position="108"/>
    </location>
    <ligand>
        <name>(7,8-dihydropterin-6-yl)methyl diphosphate</name>
        <dbReference type="ChEBI" id="CHEBI:72950"/>
    </ligand>
</feature>
<feature type="binding site" evidence="2">
    <location>
        <position position="172"/>
    </location>
    <ligand>
        <name>(7,8-dihydropterin-6-yl)methyl diphosphate</name>
        <dbReference type="ChEBI" id="CHEBI:72950"/>
    </ligand>
</feature>
<feature type="binding site" evidence="2">
    <location>
        <position position="208"/>
    </location>
    <ligand>
        <name>(7,8-dihydropterin-6-yl)methyl diphosphate</name>
        <dbReference type="ChEBI" id="CHEBI:72950"/>
    </ligand>
</feature>
<feature type="binding site" evidence="2">
    <location>
        <begin position="244"/>
        <end position="246"/>
    </location>
    <ligand>
        <name>(7,8-dihydropterin-6-yl)methyl diphosphate</name>
        <dbReference type="ChEBI" id="CHEBI:72950"/>
    </ligand>
</feature>